<evidence type="ECO:0000250" key="1">
    <source>
        <dbReference type="UniProtKB" id="Q4WW97"/>
    </source>
</evidence>
<evidence type="ECO:0000269" key="2">
    <source>
    </source>
</evidence>
<evidence type="ECO:0000269" key="3">
    <source>
    </source>
</evidence>
<evidence type="ECO:0000303" key="4">
    <source>
    </source>
</evidence>
<evidence type="ECO:0000305" key="5"/>
<comment type="function">
    <text evidence="3">Hypoxia responsive morphology factor that modulates the expression of the subtelomeric hrmA-associated cluster (HAC) containing genes that alter the hyphal surface (such as reduced total chitin or increased beta-glucan exposure) and perturb inter-hyphal interactions within the developing biofilms, resulting in a loss of vertically aligned polarized growing filaments (PubMed:31548684). Consequently, this hypoxia-typic morphotype (called H-MORPH) with altered biofilm architecture leads to increased hypoxia fitness, increased host inflammation, rapid disease progression, and mortality in a murine model of invasive aspergillosis (PubMed:31548684).</text>
</comment>
<comment type="subcellular location">
    <subcellularLocation>
        <location evidence="3">Nucleus</location>
    </subcellularLocation>
</comment>
<comment type="induction">
    <text evidence="2">Expression is increased in a mouse model of invasive pulmonary aspergillosis.</text>
</comment>
<comment type="domain">
    <text evidence="3">The N-terminal bipartite nuclear localization signal is required for nuclear localization and generation of the H-MORPH morphotype.</text>
</comment>
<comment type="domain">
    <text evidence="3">The RNA recognition motif (RRM)-like domain is not required for nuclear localization but is necessary for induction of the expression of the HAC cluster genes such as cgnA.</text>
</comment>
<comment type="disruption phenotype">
    <text evidence="3">Impairs the formation of the hypoxia-typic morphotype and restores classical biofilm architecture.</text>
</comment>
<comment type="similarity">
    <text evidence="5">Belongs to the hrmA family.</text>
</comment>
<feature type="chain" id="PRO_0000460412" description="Hypoxia responsive morphology factor A">
    <location>
        <begin position="1"/>
        <end position="292"/>
    </location>
</feature>
<feature type="region of interest" description="RNA recognition motif (RRM)-like domain" evidence="3">
    <location>
        <begin position="156"/>
        <end position="186"/>
    </location>
</feature>
<feature type="short sequence motif" description="Bipartite nuclear localization signal" evidence="1">
    <location>
        <begin position="48"/>
        <end position="70"/>
    </location>
</feature>
<sequence>MASTKPASSLIYQAWNKLSINQTIPSDSLELLGERLAIAFAPKLKEQRRNGRRRNLEYVAQHRRKIARKIYLEILEKDPNIFLPFILAVSPRACLSFDISSFLEQHQSQGRHFLRNNAEAILWGLAKKHDIDGSLHFRKLMREIFQLSPPATEAEGKEHYSLHLSTLPAIRNAFGDVIFDAIERSPTQVTARAKGYFSEKTESVWTKVPYRSSQDAIISLEVGSAIELANVLFPIATQKIVSILSACSPTVRQKNFSEAILGPDPQDTPATSSEIGMKFKVHMTAVANSTLC</sequence>
<keyword id="KW-0130">Cell adhesion</keyword>
<keyword id="KW-0539">Nucleus</keyword>
<keyword id="KW-0843">Virulence</keyword>
<gene>
    <name evidence="4" type="primary">hrmA</name>
    <name type="ORF">AFUB_079010</name>
</gene>
<accession>B0Y8Y7</accession>
<protein>
    <recommendedName>
        <fullName evidence="4">Hypoxia responsive morphology factor A</fullName>
    </recommendedName>
    <alternativeName>
        <fullName evidence="4">Subtelomeric hrmA-associated cluster protein hrmA</fullName>
    </alternativeName>
</protein>
<dbReference type="EMBL" id="DS499599">
    <property type="protein sequence ID" value="EDP49868.1"/>
    <property type="molecule type" value="Genomic_DNA"/>
</dbReference>
<dbReference type="EnsemblFungi" id="EDP49868">
    <property type="protein sequence ID" value="EDP49868"/>
    <property type="gene ID" value="AFUB_079010"/>
</dbReference>
<dbReference type="VEuPathDB" id="FungiDB:AFUB_079010"/>
<dbReference type="HOGENOM" id="CLU_983876_0_0_1"/>
<dbReference type="OrthoDB" id="48083at5052"/>
<dbReference type="PhylomeDB" id="B0Y8Y7"/>
<dbReference type="Proteomes" id="UP000001699">
    <property type="component" value="Unassembled WGS sequence"/>
</dbReference>
<dbReference type="GO" id="GO:0005634">
    <property type="term" value="C:nucleus"/>
    <property type="evidence" value="ECO:0007669"/>
    <property type="project" value="UniProtKB-SubCell"/>
</dbReference>
<dbReference type="GO" id="GO:0007155">
    <property type="term" value="P:cell adhesion"/>
    <property type="evidence" value="ECO:0007669"/>
    <property type="project" value="UniProtKB-KW"/>
</dbReference>
<organism>
    <name type="scientific">Aspergillus fumigatus (strain CBS 144.89 / FGSC A1163 / CEA10)</name>
    <name type="common">Neosartorya fumigata</name>
    <dbReference type="NCBI Taxonomy" id="451804"/>
    <lineage>
        <taxon>Eukaryota</taxon>
        <taxon>Fungi</taxon>
        <taxon>Dikarya</taxon>
        <taxon>Ascomycota</taxon>
        <taxon>Pezizomycotina</taxon>
        <taxon>Eurotiomycetes</taxon>
        <taxon>Eurotiomycetidae</taxon>
        <taxon>Eurotiales</taxon>
        <taxon>Aspergillaceae</taxon>
        <taxon>Aspergillus</taxon>
        <taxon>Aspergillus subgen. Fumigati</taxon>
    </lineage>
</organism>
<reference key="1">
    <citation type="journal article" date="2008" name="PLoS Genet.">
        <title>Genomic islands in the pathogenic filamentous fungus Aspergillus fumigatus.</title>
        <authorList>
            <person name="Fedorova N.D."/>
            <person name="Khaldi N."/>
            <person name="Joardar V.S."/>
            <person name="Maiti R."/>
            <person name="Amedeo P."/>
            <person name="Anderson M.J."/>
            <person name="Crabtree J."/>
            <person name="Silva J.C."/>
            <person name="Badger J.H."/>
            <person name="Albarraq A."/>
            <person name="Angiuoli S."/>
            <person name="Bussey H."/>
            <person name="Bowyer P."/>
            <person name="Cotty P.J."/>
            <person name="Dyer P.S."/>
            <person name="Egan A."/>
            <person name="Galens K."/>
            <person name="Fraser-Liggett C.M."/>
            <person name="Haas B.J."/>
            <person name="Inman J.M."/>
            <person name="Kent R."/>
            <person name="Lemieux S."/>
            <person name="Malavazi I."/>
            <person name="Orvis J."/>
            <person name="Roemer T."/>
            <person name="Ronning C.M."/>
            <person name="Sundaram J.P."/>
            <person name="Sutton G."/>
            <person name="Turner G."/>
            <person name="Venter J.C."/>
            <person name="White O.R."/>
            <person name="Whitty B.R."/>
            <person name="Youngman P."/>
            <person name="Wolfe K.H."/>
            <person name="Goldman G.H."/>
            <person name="Wortman J.R."/>
            <person name="Jiang B."/>
            <person name="Denning D.W."/>
            <person name="Nierman W.C."/>
        </authorList>
    </citation>
    <scope>NUCLEOTIDE SEQUENCE [LARGE SCALE GENOMIC DNA]</scope>
    <source>
        <strain>CBS 144.89 / FGSC A1163 / CEA10</strain>
    </source>
</reference>
<reference key="2">
    <citation type="journal article" date="2017" name="Sci. Rep.">
        <title>Modulation of immune signaling and metabolism highlights host and fungal transcriptional responses in mouse models of invasive pulmonary aspergillosis.</title>
        <authorList>
            <person name="Kale S.D."/>
            <person name="Ayubi T."/>
            <person name="Chung D."/>
            <person name="Tubau-Juni N."/>
            <person name="Leber A."/>
            <person name="Dang H.X."/>
            <person name="Karyala S."/>
            <person name="Hontecillas R."/>
            <person name="Lawrence C.B."/>
            <person name="Cramer R.A."/>
            <person name="Bassaganya-Riera J."/>
        </authorList>
    </citation>
    <scope>INDUCTION</scope>
</reference>
<reference key="3">
    <citation type="journal article" date="2019" name="Nat. Microbiol.">
        <title>Fungal biofilm morphology impacts hypoxia fitness and disease progression.</title>
        <authorList>
            <person name="Kowalski C.H."/>
            <person name="Kerkaert J.D."/>
            <person name="Liu K.W."/>
            <person name="Bond M.C."/>
            <person name="Hartmann R."/>
            <person name="Nadell C.D."/>
            <person name="Stajich J.E."/>
            <person name="Cramer R.A."/>
        </authorList>
    </citation>
    <scope>FUNCTION</scope>
    <scope>DISRUPTION PHENOTYPE</scope>
    <scope>INDUCTION</scope>
    <scope>SUBCELLULAR LOCATION</scope>
    <scope>DOMAIN</scope>
</reference>
<name>HRMA_ASPFC</name>
<proteinExistence type="evidence at transcript level"/>